<reference key="1">
    <citation type="journal article" date="2002" name="Mol. Cell. Neurosci.">
        <title>Caspr3 and Caspr4, two novel members of the Caspr family are expressed in the nervous system and interact with PDZ domains.</title>
        <authorList>
            <person name="Spiegel I."/>
            <person name="Salomon D."/>
            <person name="Erne B."/>
            <person name="Schaeren-Wiemers N."/>
            <person name="Peles E."/>
        </authorList>
    </citation>
    <scope>NUCLEOTIDE SEQUENCE [MRNA] (ISOFORM 1)</scope>
    <source>
        <tissue>Brain</tissue>
    </source>
</reference>
<reference key="2">
    <citation type="journal article" date="2000" name="DNA Res.">
        <title>Prediction of the coding sequences of unidentified human genes. XIX. The complete sequences of 100 new cDNA clones from brain which code for large proteins in vitro.</title>
        <authorList>
            <person name="Nagase T."/>
            <person name="Kikuno R."/>
            <person name="Hattori A."/>
            <person name="Kondo Y."/>
            <person name="Okumura K."/>
            <person name="Ohara O."/>
        </authorList>
    </citation>
    <scope>NUCLEOTIDE SEQUENCE [LARGE SCALE MRNA] (ISOFORM 2)</scope>
    <scope>VARIANT HIS-845</scope>
    <source>
        <tissue>Brain</tissue>
    </source>
</reference>
<reference key="3">
    <citation type="submission" date="2003-01" db="EMBL/GenBank/DDBJ databases">
        <authorList>
            <person name="Nagase T."/>
            <person name="Kikuno R."/>
            <person name="Yamakawa H."/>
            <person name="Ohara O."/>
        </authorList>
    </citation>
    <scope>SEQUENCE REVISION</scope>
</reference>
<reference key="4">
    <citation type="journal article" date="2004" name="Nature">
        <title>DNA sequence and analysis of human chromosome 9.</title>
        <authorList>
            <person name="Humphray S.J."/>
            <person name="Oliver K."/>
            <person name="Hunt A.R."/>
            <person name="Plumb R.W."/>
            <person name="Loveland J.E."/>
            <person name="Howe K.L."/>
            <person name="Andrews T.D."/>
            <person name="Searle S."/>
            <person name="Hunt S.E."/>
            <person name="Scott C.E."/>
            <person name="Jones M.C."/>
            <person name="Ainscough R."/>
            <person name="Almeida J.P."/>
            <person name="Ambrose K.D."/>
            <person name="Ashwell R.I.S."/>
            <person name="Babbage A.K."/>
            <person name="Babbage S."/>
            <person name="Bagguley C.L."/>
            <person name="Bailey J."/>
            <person name="Banerjee R."/>
            <person name="Barker D.J."/>
            <person name="Barlow K.F."/>
            <person name="Bates K."/>
            <person name="Beasley H."/>
            <person name="Beasley O."/>
            <person name="Bird C.P."/>
            <person name="Bray-Allen S."/>
            <person name="Brown A.J."/>
            <person name="Brown J.Y."/>
            <person name="Burford D."/>
            <person name="Burrill W."/>
            <person name="Burton J."/>
            <person name="Carder C."/>
            <person name="Carter N.P."/>
            <person name="Chapman J.C."/>
            <person name="Chen Y."/>
            <person name="Clarke G."/>
            <person name="Clark S.Y."/>
            <person name="Clee C.M."/>
            <person name="Clegg S."/>
            <person name="Collier R.E."/>
            <person name="Corby N."/>
            <person name="Crosier M."/>
            <person name="Cummings A.T."/>
            <person name="Davies J."/>
            <person name="Dhami P."/>
            <person name="Dunn M."/>
            <person name="Dutta I."/>
            <person name="Dyer L.W."/>
            <person name="Earthrowl M.E."/>
            <person name="Faulkner L."/>
            <person name="Fleming C.J."/>
            <person name="Frankish A."/>
            <person name="Frankland J.A."/>
            <person name="French L."/>
            <person name="Fricker D.G."/>
            <person name="Garner P."/>
            <person name="Garnett J."/>
            <person name="Ghori J."/>
            <person name="Gilbert J.G.R."/>
            <person name="Glison C."/>
            <person name="Grafham D.V."/>
            <person name="Gribble S."/>
            <person name="Griffiths C."/>
            <person name="Griffiths-Jones S."/>
            <person name="Grocock R."/>
            <person name="Guy J."/>
            <person name="Hall R.E."/>
            <person name="Hammond S."/>
            <person name="Harley J.L."/>
            <person name="Harrison E.S.I."/>
            <person name="Hart E.A."/>
            <person name="Heath P.D."/>
            <person name="Henderson C.D."/>
            <person name="Hopkins B.L."/>
            <person name="Howard P.J."/>
            <person name="Howden P.J."/>
            <person name="Huckle E."/>
            <person name="Johnson C."/>
            <person name="Johnson D."/>
            <person name="Joy A.A."/>
            <person name="Kay M."/>
            <person name="Keenan S."/>
            <person name="Kershaw J.K."/>
            <person name="Kimberley A.M."/>
            <person name="King A."/>
            <person name="Knights A."/>
            <person name="Laird G.K."/>
            <person name="Langford C."/>
            <person name="Lawlor S."/>
            <person name="Leongamornlert D.A."/>
            <person name="Leversha M."/>
            <person name="Lloyd C."/>
            <person name="Lloyd D.M."/>
            <person name="Lovell J."/>
            <person name="Martin S."/>
            <person name="Mashreghi-Mohammadi M."/>
            <person name="Matthews L."/>
            <person name="McLaren S."/>
            <person name="McLay K.E."/>
            <person name="McMurray A."/>
            <person name="Milne S."/>
            <person name="Nickerson T."/>
            <person name="Nisbett J."/>
            <person name="Nordsiek G."/>
            <person name="Pearce A.V."/>
            <person name="Peck A.I."/>
            <person name="Porter K.M."/>
            <person name="Pandian R."/>
            <person name="Pelan S."/>
            <person name="Phillimore B."/>
            <person name="Povey S."/>
            <person name="Ramsey Y."/>
            <person name="Rand V."/>
            <person name="Scharfe M."/>
            <person name="Sehra H.K."/>
            <person name="Shownkeen R."/>
            <person name="Sims S.K."/>
            <person name="Skuce C.D."/>
            <person name="Smith M."/>
            <person name="Steward C.A."/>
            <person name="Swarbreck D."/>
            <person name="Sycamore N."/>
            <person name="Tester J."/>
            <person name="Thorpe A."/>
            <person name="Tracey A."/>
            <person name="Tromans A."/>
            <person name="Thomas D.W."/>
            <person name="Wall M."/>
            <person name="Wallis J.M."/>
            <person name="West A.P."/>
            <person name="Whitehead S.L."/>
            <person name="Willey D.L."/>
            <person name="Williams S.A."/>
            <person name="Wilming L."/>
            <person name="Wray P.W."/>
            <person name="Young L."/>
            <person name="Ashurst J.L."/>
            <person name="Coulson A."/>
            <person name="Blocker H."/>
            <person name="Durbin R.M."/>
            <person name="Sulston J.E."/>
            <person name="Hubbard T."/>
            <person name="Jackson M.J."/>
            <person name="Bentley D.R."/>
            <person name="Beck S."/>
            <person name="Rogers J."/>
            <person name="Dunham I."/>
        </authorList>
    </citation>
    <scope>NUCLEOTIDE SEQUENCE [LARGE SCALE GENOMIC DNA]</scope>
</reference>
<feature type="signal peptide" evidence="2">
    <location>
        <begin position="1"/>
        <end position="25"/>
    </location>
</feature>
<feature type="chain" id="PRO_0000019509" description="Contactin-associated protein-like 3">
    <location>
        <begin position="26"/>
        <end position="1288"/>
    </location>
</feature>
<feature type="topological domain" description="Extracellular" evidence="2">
    <location>
        <begin position="26"/>
        <end position="1245"/>
    </location>
</feature>
<feature type="transmembrane region" description="Helical" evidence="2">
    <location>
        <begin position="1246"/>
        <end position="1266"/>
    </location>
</feature>
<feature type="topological domain" description="Cytoplasmic" evidence="2">
    <location>
        <begin position="1267"/>
        <end position="1288"/>
    </location>
</feature>
<feature type="domain" description="F5/8 type C" evidence="4">
    <location>
        <begin position="31"/>
        <end position="177"/>
    </location>
</feature>
<feature type="domain" description="Laminin G-like 1" evidence="5">
    <location>
        <begin position="183"/>
        <end position="364"/>
    </location>
</feature>
<feature type="domain" description="Laminin G-like 2" evidence="5">
    <location>
        <begin position="370"/>
        <end position="545"/>
    </location>
</feature>
<feature type="domain" description="EGF-like 1" evidence="3">
    <location>
        <begin position="551"/>
        <end position="583"/>
    </location>
</feature>
<feature type="domain" description="Fibrinogen C-terminal" evidence="6">
    <location>
        <begin position="584"/>
        <end position="792"/>
    </location>
</feature>
<feature type="domain" description="Laminin G-like 3" evidence="5">
    <location>
        <begin position="793"/>
        <end position="958"/>
    </location>
</feature>
<feature type="domain" description="EGF-like 2" evidence="3">
    <location>
        <begin position="962"/>
        <end position="996"/>
    </location>
</feature>
<feature type="domain" description="Laminin G-like 4" evidence="5">
    <location>
        <begin position="1015"/>
        <end position="1203"/>
    </location>
</feature>
<feature type="region of interest" description="Disordered" evidence="7">
    <location>
        <begin position="1215"/>
        <end position="1236"/>
    </location>
</feature>
<feature type="glycosylation site" description="N-linked (GlcNAc...) asparagine" evidence="2">
    <location>
        <position position="285"/>
    </location>
</feature>
<feature type="glycosylation site" description="N-linked (GlcNAc...) asparagine" evidence="2">
    <location>
        <position position="359"/>
    </location>
</feature>
<feature type="glycosylation site" description="N-linked (GlcNAc...) asparagine" evidence="2">
    <location>
        <position position="441"/>
    </location>
</feature>
<feature type="glycosylation site" description="N-linked (GlcNAc...) asparagine" evidence="2">
    <location>
        <position position="497"/>
    </location>
</feature>
<feature type="glycosylation site" description="N-linked (GlcNAc...) asparagine" evidence="2">
    <location>
        <position position="623"/>
    </location>
</feature>
<feature type="glycosylation site" description="N-linked (GlcNAc...) asparagine" evidence="2">
    <location>
        <position position="706"/>
    </location>
</feature>
<feature type="glycosylation site" description="N-linked (GlcNAc...) asparagine" evidence="2">
    <location>
        <position position="1023"/>
    </location>
</feature>
<feature type="glycosylation site" description="N-linked (GlcNAc...) asparagine" evidence="2">
    <location>
        <position position="1073"/>
    </location>
</feature>
<feature type="glycosylation site" description="N-linked (GlcNAc...) asparagine" evidence="2">
    <location>
        <position position="1120"/>
    </location>
</feature>
<feature type="disulfide bond" evidence="1">
    <location>
        <begin position="31"/>
        <end position="177"/>
    </location>
</feature>
<feature type="disulfide bond" evidence="1">
    <location>
        <begin position="332"/>
        <end position="364"/>
    </location>
</feature>
<feature type="disulfide bond" evidence="1">
    <location>
        <begin position="513"/>
        <end position="545"/>
    </location>
</feature>
<feature type="disulfide bond" evidence="1">
    <location>
        <begin position="551"/>
        <end position="562"/>
    </location>
</feature>
<feature type="disulfide bond" evidence="1">
    <location>
        <begin position="556"/>
        <end position="571"/>
    </location>
</feature>
<feature type="disulfide bond" evidence="1">
    <location>
        <begin position="573"/>
        <end position="583"/>
    </location>
</feature>
<feature type="disulfide bond" evidence="1">
    <location>
        <begin position="931"/>
        <end position="958"/>
    </location>
</feature>
<feature type="disulfide bond" evidence="1">
    <location>
        <begin position="962"/>
        <end position="975"/>
    </location>
</feature>
<feature type="disulfide bond" evidence="1">
    <location>
        <begin position="969"/>
        <end position="984"/>
    </location>
</feature>
<feature type="disulfide bond" evidence="1">
    <location>
        <begin position="986"/>
        <end position="996"/>
    </location>
</feature>
<feature type="disulfide bond" evidence="1">
    <location>
        <begin position="1167"/>
        <end position="1203"/>
    </location>
</feature>
<feature type="splice variant" id="VSP_003535" description="In isoform 2." evidence="9">
    <original>NQSTKKQV</original>
    <variation>IPQMQKSN</variation>
    <location>
        <begin position="1120"/>
        <end position="1127"/>
    </location>
</feature>
<feature type="splice variant" id="VSP_003536" description="In isoform 2." evidence="9">
    <location>
        <begin position="1128"/>
        <end position="1288"/>
    </location>
</feature>
<feature type="sequence variant" id="VAR_046710" description="In dbSNP:rs1758272.">
    <original>A</original>
    <variation>S</variation>
    <location>
        <position position="628"/>
    </location>
</feature>
<feature type="sequence variant" id="VAR_046711" description="In dbSNP:rs7852039." evidence="8">
    <original>R</original>
    <variation>H</variation>
    <location>
        <position position="845"/>
    </location>
</feature>
<feature type="sequence conflict" description="In Ref. 1; AAG52889." evidence="10" ref="1">
    <original>S</original>
    <variation>R</variation>
    <location>
        <position position="21"/>
    </location>
</feature>
<feature type="sequence conflict" description="In Ref. 1; AAG52889." evidence="10" ref="1">
    <original>A</original>
    <variation>S</variation>
    <location>
        <position position="33"/>
    </location>
</feature>
<feature type="sequence conflict" description="In Ref. 1; AAG52889." evidence="10" ref="1">
    <original>M</original>
    <variation>I</variation>
    <location>
        <position position="89"/>
    </location>
</feature>
<feature type="sequence conflict" description="In Ref. 1; AAG52889 and 2; BAB21805." evidence="10" ref="1 2">
    <original>S</original>
    <variation>Y</variation>
    <location>
        <position position="711"/>
    </location>
</feature>
<feature type="sequence conflict" description="In Ref. 2; BAB21805." evidence="10" ref="2">
    <original>G</original>
    <variation>V</variation>
    <location>
        <position position="714"/>
    </location>
</feature>
<feature type="sequence conflict" description="In Ref. 1; AAG52889." evidence="10" ref="1">
    <original>AGR</original>
    <variation>TGQ</variation>
    <location>
        <begin position="769"/>
        <end position="771"/>
    </location>
</feature>
<feature type="sequence conflict" description="In Ref. 1; AAG52889." evidence="10" ref="1">
    <original>A</original>
    <variation>D</variation>
    <location>
        <position position="777"/>
    </location>
</feature>
<accession>Q9BZ76</accession>
<accession>B1AMA0</accession>
<accession>Q9C0E9</accession>
<keyword id="KW-0025">Alternative splicing</keyword>
<keyword id="KW-0130">Cell adhesion</keyword>
<keyword id="KW-1003">Cell membrane</keyword>
<keyword id="KW-1015">Disulfide bond</keyword>
<keyword id="KW-0245">EGF-like domain</keyword>
<keyword id="KW-0325">Glycoprotein</keyword>
<keyword id="KW-0472">Membrane</keyword>
<keyword id="KW-1267">Proteomics identification</keyword>
<keyword id="KW-1185">Reference proteome</keyword>
<keyword id="KW-0677">Repeat</keyword>
<keyword id="KW-0964">Secreted</keyword>
<keyword id="KW-0732">Signal</keyword>
<keyword id="KW-0812">Transmembrane</keyword>
<keyword id="KW-1133">Transmembrane helix</keyword>
<name>CNTP3_HUMAN</name>
<sequence>MASVAWAVLKVLLLLPTQTWSPVGAGNPPDCDAPLASALPRSSFSSSSELSSSHGPGFSRLNRRDGAGGWTPLVSNKYQWLQIDLGERMEVTAVATQGGYGSSDWVTSYLLMFSDGGRNWKQYRREESIWGFPGNTNADSVVHYRLQPPFEARFLRFLPLAWNPRGRIGMRIEVYGCAYKSEVVYFDGQSALLYRLDKKPLKPIRDVISLKFKAMQSNGILLHREGQHGNHITLELIKGKLVFFLNSGNAKLPSTIAPVTLTLGSLLDDQHWHSVLIELLDTQVNFTVDKHTHHFQAKGDSSYLDLNFEISFGGIPTPGRSRAFRRKSFHGCLENLYYNGVDVTELAKKHKPQILMMGNVSFSCPQPQTVPVTFLSSRSYLALPGNSGEDKVSVTFQFRTWNRAGHLLFGELRRGSGSFVLFLKDGKLKLSLFQPGQSPRNVTAGAGLNDGQWHSVSFSAKWSHMNVVVDDDTAVQPLVAVLIDSGDTYYFGGCLDNSSGSGCKSPLGGFQGCLRLITIGDKAVDPILVQQGALGSFRDLQIDSCGITDRCLPSYCEHGGECSQSWDTFSCDCLGTGYTGETCHSSLYEQSCEAHKHRGNPSGLYYIDADGSGPLGPFLVYCNMTADAAWTVVQHGGPDAVTLRGAPSGHPRSAVSFAYAAGAGQLRSAVNLAERCEQRLALRCGTARRPDSRDGTPLSWWVGRTNETHTSWGGSLPDAQKCTCGLEGNCIDSQYYCNCDAGRNEWTSDTIVLSQKEHLPVTQIVMTDAGRPHSEAAYTLGPLLCRGDQSFWNSASFNTETSYLHFPAFHGELTADVCFFFKTTVSSGVFMENLGITDFIRIELRAPTEVTFSFDVGNGPCEVTVQSPTPFNDNQWHHVRAERNVKGASLQVDQLPQKMQPAPADGHVRLQLNSQLFIGGTATRQRGFLGCIRSLQLNGVALDLEERATVTPGVEPGCAGHCSTYGHLCRNGGRCREKRRGVTCDCAFSAYDGPFCSNEISAYFATGSSMTYHFQEHYTLSENSSSLVSSLHRDVTLTREMITLSFRTTRTPSLLLYVSSFYEEYLSVILANNGSLQIRYKLDRHQNPDAFTFDFKNMADGQLHQVKINREEAVVMVEVNQSTKKQVILSSGTEFNAVKSLILGKVLEAAGADPDTRRAATSGFTGCLSAVRFGRAAPLKAALRPSGPSRVTVRGHVAPMARCAAGAASGSPARELAPRLAGGAGRSGPADEGEPLVNADRRDSAVIGGVIAVVIFILLCITAIAIRIYQQRKLRKENESKVSKKEEC</sequence>
<gene>
    <name type="primary">CNTNAP3</name>
    <name type="synonym">CASPR3</name>
    <name type="synonym">KIAA1714</name>
</gene>
<dbReference type="EMBL" id="AF333769">
    <property type="protein sequence ID" value="AAG52889.2"/>
    <property type="molecule type" value="mRNA"/>
</dbReference>
<dbReference type="EMBL" id="AB051501">
    <property type="protein sequence ID" value="BAB21805.2"/>
    <property type="status" value="ALT_INIT"/>
    <property type="molecule type" value="mRNA"/>
</dbReference>
<dbReference type="EMBL" id="AL162501">
    <property type="status" value="NOT_ANNOTATED_CDS"/>
    <property type="molecule type" value="Genomic_DNA"/>
</dbReference>
<dbReference type="EMBL" id="AL353729">
    <property type="status" value="NOT_ANNOTATED_CDS"/>
    <property type="molecule type" value="Genomic_DNA"/>
</dbReference>
<dbReference type="CCDS" id="CCDS6616.1">
    <molecule id="Q9BZ76-1"/>
</dbReference>
<dbReference type="RefSeq" id="NP_387504.2">
    <molecule id="Q9BZ76-1"/>
    <property type="nucleotide sequence ID" value="NM_033655.3"/>
</dbReference>
<dbReference type="SMR" id="Q9BZ76"/>
<dbReference type="BioGRID" id="123011">
    <property type="interactions" value="212"/>
</dbReference>
<dbReference type="FunCoup" id="Q9BZ76">
    <property type="interactions" value="633"/>
</dbReference>
<dbReference type="IntAct" id="Q9BZ76">
    <property type="interactions" value="112"/>
</dbReference>
<dbReference type="STRING" id="9606.ENSP00000297668"/>
<dbReference type="GlyCosmos" id="Q9BZ76">
    <property type="glycosylation" value="9 sites, No reported glycans"/>
</dbReference>
<dbReference type="GlyGen" id="Q9BZ76">
    <property type="glycosylation" value="13 sites, 1 O-linked glycan (1 site)"/>
</dbReference>
<dbReference type="iPTMnet" id="Q9BZ76"/>
<dbReference type="PhosphoSitePlus" id="Q9BZ76"/>
<dbReference type="BioMuta" id="CNTNAP3"/>
<dbReference type="DMDM" id="209572752"/>
<dbReference type="jPOST" id="Q9BZ76"/>
<dbReference type="MassIVE" id="Q9BZ76"/>
<dbReference type="PaxDb" id="9606-ENSP00000297668"/>
<dbReference type="PeptideAtlas" id="Q9BZ76"/>
<dbReference type="ProteomicsDB" id="79776">
    <molecule id="Q9BZ76-1"/>
</dbReference>
<dbReference type="ProteomicsDB" id="79777">
    <molecule id="Q9BZ76-2"/>
</dbReference>
<dbReference type="Antibodypedia" id="12082">
    <property type="antibodies" value="63 antibodies from 21 providers"/>
</dbReference>
<dbReference type="DNASU" id="79937"/>
<dbReference type="Ensembl" id="ENST00000297668.11">
    <molecule id="Q9BZ76-1"/>
    <property type="protein sequence ID" value="ENSP00000297668.6"/>
    <property type="gene ID" value="ENSG00000106714.18"/>
</dbReference>
<dbReference type="GeneID" id="79937"/>
<dbReference type="KEGG" id="hsa:79937"/>
<dbReference type="MANE-Select" id="ENST00000297668.11">
    <property type="protein sequence ID" value="ENSP00000297668.6"/>
    <property type="RefSeq nucleotide sequence ID" value="NM_033655.5"/>
    <property type="RefSeq protein sequence ID" value="NP_387504.2"/>
</dbReference>
<dbReference type="UCSC" id="uc004abi.4">
    <molecule id="Q9BZ76-1"/>
    <property type="organism name" value="human"/>
</dbReference>
<dbReference type="AGR" id="HGNC:13834"/>
<dbReference type="CTD" id="79937"/>
<dbReference type="DisGeNET" id="79937"/>
<dbReference type="GeneCards" id="CNTNAP3"/>
<dbReference type="HGNC" id="HGNC:13834">
    <property type="gene designation" value="CNTNAP3"/>
</dbReference>
<dbReference type="HPA" id="ENSG00000106714">
    <property type="expression patterns" value="Low tissue specificity"/>
</dbReference>
<dbReference type="MalaCards" id="CNTNAP3"/>
<dbReference type="MIM" id="610517">
    <property type="type" value="gene"/>
</dbReference>
<dbReference type="neXtProt" id="NX_Q9BZ76"/>
<dbReference type="OpenTargets" id="ENSG00000106714"/>
<dbReference type="PharmGKB" id="PA134963289"/>
<dbReference type="VEuPathDB" id="HostDB:ENSG00000106714"/>
<dbReference type="eggNOG" id="KOG3516">
    <property type="taxonomic scope" value="Eukaryota"/>
</dbReference>
<dbReference type="GeneTree" id="ENSGT00940000160228"/>
<dbReference type="HOGENOM" id="CLU_003504_1_0_1"/>
<dbReference type="InParanoid" id="Q9BZ76"/>
<dbReference type="OMA" id="HISDRSG"/>
<dbReference type="OrthoDB" id="26719at2759"/>
<dbReference type="PAN-GO" id="Q9BZ76">
    <property type="GO annotations" value="0 GO annotations based on evolutionary models"/>
</dbReference>
<dbReference type="PhylomeDB" id="Q9BZ76"/>
<dbReference type="TreeFam" id="TF321823"/>
<dbReference type="PathwayCommons" id="Q9BZ76"/>
<dbReference type="SignaLink" id="Q9BZ76"/>
<dbReference type="BioGRID-ORCS" id="79937">
    <property type="hits" value="16 hits in 1067 CRISPR screens"/>
</dbReference>
<dbReference type="ChiTaRS" id="CNTNAP3">
    <property type="organism name" value="human"/>
</dbReference>
<dbReference type="GenomeRNAi" id="79937"/>
<dbReference type="Pharos" id="Q9BZ76">
    <property type="development level" value="Tbio"/>
</dbReference>
<dbReference type="PRO" id="PR:Q9BZ76"/>
<dbReference type="Proteomes" id="UP000005640">
    <property type="component" value="Chromosome 9"/>
</dbReference>
<dbReference type="RNAct" id="Q9BZ76">
    <property type="molecule type" value="protein"/>
</dbReference>
<dbReference type="Bgee" id="ENSG00000106714">
    <property type="expression patterns" value="Expressed in male germ line stem cell (sensu Vertebrata) in testis and 100 other cell types or tissues"/>
</dbReference>
<dbReference type="ExpressionAtlas" id="Q9BZ76">
    <property type="expression patterns" value="baseline and differential"/>
</dbReference>
<dbReference type="GO" id="GO:0005576">
    <property type="term" value="C:extracellular region"/>
    <property type="evidence" value="ECO:0007669"/>
    <property type="project" value="UniProtKB-SubCell"/>
</dbReference>
<dbReference type="GO" id="GO:0016020">
    <property type="term" value="C:membrane"/>
    <property type="evidence" value="ECO:0000303"/>
    <property type="project" value="UniProtKB"/>
</dbReference>
<dbReference type="GO" id="GO:0005886">
    <property type="term" value="C:plasma membrane"/>
    <property type="evidence" value="ECO:0007669"/>
    <property type="project" value="UniProtKB-SubCell"/>
</dbReference>
<dbReference type="GO" id="GO:0007155">
    <property type="term" value="P:cell adhesion"/>
    <property type="evidence" value="ECO:0007669"/>
    <property type="project" value="UniProtKB-KW"/>
</dbReference>
<dbReference type="GO" id="GO:0008037">
    <property type="term" value="P:cell recognition"/>
    <property type="evidence" value="ECO:0000303"/>
    <property type="project" value="UniProtKB"/>
</dbReference>
<dbReference type="CDD" id="cd00054">
    <property type="entry name" value="EGF_CA"/>
    <property type="match status" value="1"/>
</dbReference>
<dbReference type="CDD" id="cd00057">
    <property type="entry name" value="FA58C"/>
    <property type="match status" value="1"/>
</dbReference>
<dbReference type="CDD" id="cd00110">
    <property type="entry name" value="LamG"/>
    <property type="match status" value="4"/>
</dbReference>
<dbReference type="FunFam" id="2.60.120.260:FF:000016">
    <property type="entry name" value="Contactin-associated protein-like 4 isoform 1"/>
    <property type="match status" value="1"/>
</dbReference>
<dbReference type="FunFam" id="2.60.120.200:FF:000026">
    <property type="entry name" value="contactin-associated protein-like 4 isoform X1"/>
    <property type="match status" value="1"/>
</dbReference>
<dbReference type="Gene3D" id="2.60.120.1000">
    <property type="match status" value="1"/>
</dbReference>
<dbReference type="Gene3D" id="2.60.120.200">
    <property type="match status" value="4"/>
</dbReference>
<dbReference type="Gene3D" id="2.60.120.260">
    <property type="entry name" value="Galactose-binding domain-like"/>
    <property type="match status" value="1"/>
</dbReference>
<dbReference type="Gene3D" id="2.10.25.10">
    <property type="entry name" value="Laminin"/>
    <property type="match status" value="2"/>
</dbReference>
<dbReference type="InterPro" id="IPR013320">
    <property type="entry name" value="ConA-like_dom_sf"/>
</dbReference>
<dbReference type="InterPro" id="IPR000742">
    <property type="entry name" value="EGF-like_dom"/>
</dbReference>
<dbReference type="InterPro" id="IPR000421">
    <property type="entry name" value="FA58C"/>
</dbReference>
<dbReference type="InterPro" id="IPR036056">
    <property type="entry name" value="Fibrinogen-like_C"/>
</dbReference>
<dbReference type="InterPro" id="IPR002181">
    <property type="entry name" value="Fibrinogen_a/b/g_C_dom"/>
</dbReference>
<dbReference type="InterPro" id="IPR008979">
    <property type="entry name" value="Galactose-bd-like_sf"/>
</dbReference>
<dbReference type="InterPro" id="IPR001791">
    <property type="entry name" value="Laminin_G"/>
</dbReference>
<dbReference type="InterPro" id="IPR050372">
    <property type="entry name" value="Neurexin-related_CASP"/>
</dbReference>
<dbReference type="NCBIfam" id="NF040941">
    <property type="entry name" value="GGGWT_bact"/>
    <property type="match status" value="1"/>
</dbReference>
<dbReference type="PANTHER" id="PTHR15036:SF36">
    <property type="entry name" value="CONTACTIN-ASSOCIATED PROTEIN-LIKE 3-RELATED"/>
    <property type="match status" value="1"/>
</dbReference>
<dbReference type="PANTHER" id="PTHR15036">
    <property type="entry name" value="PIKACHURIN-LIKE PROTEIN"/>
    <property type="match status" value="1"/>
</dbReference>
<dbReference type="Pfam" id="PF00008">
    <property type="entry name" value="EGF"/>
    <property type="match status" value="1"/>
</dbReference>
<dbReference type="Pfam" id="PF00754">
    <property type="entry name" value="F5_F8_type_C"/>
    <property type="match status" value="1"/>
</dbReference>
<dbReference type="Pfam" id="PF02210">
    <property type="entry name" value="Laminin_G_2"/>
    <property type="match status" value="4"/>
</dbReference>
<dbReference type="SMART" id="SM00181">
    <property type="entry name" value="EGF"/>
    <property type="match status" value="2"/>
</dbReference>
<dbReference type="SMART" id="SM00231">
    <property type="entry name" value="FA58C"/>
    <property type="match status" value="1"/>
</dbReference>
<dbReference type="SMART" id="SM00282">
    <property type="entry name" value="LamG"/>
    <property type="match status" value="4"/>
</dbReference>
<dbReference type="SUPFAM" id="SSF49899">
    <property type="entry name" value="Concanavalin A-like lectins/glucanases"/>
    <property type="match status" value="4"/>
</dbReference>
<dbReference type="SUPFAM" id="SSF57196">
    <property type="entry name" value="EGF/Laminin"/>
    <property type="match status" value="1"/>
</dbReference>
<dbReference type="SUPFAM" id="SSF56496">
    <property type="entry name" value="Fibrinogen C-terminal domain-like"/>
    <property type="match status" value="1"/>
</dbReference>
<dbReference type="SUPFAM" id="SSF49785">
    <property type="entry name" value="Galactose-binding domain-like"/>
    <property type="match status" value="1"/>
</dbReference>
<dbReference type="PROSITE" id="PS50026">
    <property type="entry name" value="EGF_3"/>
    <property type="match status" value="2"/>
</dbReference>
<dbReference type="PROSITE" id="PS01285">
    <property type="entry name" value="FA58C_1"/>
    <property type="match status" value="1"/>
</dbReference>
<dbReference type="PROSITE" id="PS01286">
    <property type="entry name" value="FA58C_2"/>
    <property type="match status" value="1"/>
</dbReference>
<dbReference type="PROSITE" id="PS50022">
    <property type="entry name" value="FA58C_3"/>
    <property type="match status" value="1"/>
</dbReference>
<dbReference type="PROSITE" id="PS51406">
    <property type="entry name" value="FIBRINOGEN_C_2"/>
    <property type="match status" value="1"/>
</dbReference>
<dbReference type="PROSITE" id="PS50025">
    <property type="entry name" value="LAM_G_DOMAIN"/>
    <property type="match status" value="4"/>
</dbReference>
<comment type="subcellular location">
    <molecule>Isoform 1</molecule>
    <subcellularLocation>
        <location evidence="10">Cell membrane</location>
        <topology evidence="10">Single-pass type I membrane protein</topology>
    </subcellularLocation>
</comment>
<comment type="subcellular location">
    <molecule>Isoform 2</molecule>
    <subcellularLocation>
        <location evidence="10">Secreted</location>
    </subcellularLocation>
</comment>
<comment type="alternative products">
    <event type="alternative splicing"/>
    <isoform>
        <id>Q9BZ76-1</id>
        <name>1</name>
        <sequence type="displayed"/>
    </isoform>
    <isoform>
        <id>Q9BZ76-2</id>
        <name>2</name>
        <sequence type="described" ref="VSP_003535 VSP_003536"/>
    </isoform>
</comment>
<comment type="similarity">
    <text evidence="10">Belongs to the neurexin family.</text>
</comment>
<comment type="sequence caution" evidence="10">
    <conflict type="erroneous initiation">
        <sequence resource="EMBL-CDS" id="BAB21805"/>
    </conflict>
</comment>
<protein>
    <recommendedName>
        <fullName>Contactin-associated protein-like 3</fullName>
    </recommendedName>
    <alternativeName>
        <fullName>Cell recognition molecule Caspr3</fullName>
    </alternativeName>
</protein>
<organism>
    <name type="scientific">Homo sapiens</name>
    <name type="common">Human</name>
    <dbReference type="NCBI Taxonomy" id="9606"/>
    <lineage>
        <taxon>Eukaryota</taxon>
        <taxon>Metazoa</taxon>
        <taxon>Chordata</taxon>
        <taxon>Craniata</taxon>
        <taxon>Vertebrata</taxon>
        <taxon>Euteleostomi</taxon>
        <taxon>Mammalia</taxon>
        <taxon>Eutheria</taxon>
        <taxon>Euarchontoglires</taxon>
        <taxon>Primates</taxon>
        <taxon>Haplorrhini</taxon>
        <taxon>Catarrhini</taxon>
        <taxon>Hominidae</taxon>
        <taxon>Homo</taxon>
    </lineage>
</organism>
<evidence type="ECO:0000250" key="1"/>
<evidence type="ECO:0000255" key="2"/>
<evidence type="ECO:0000255" key="3">
    <source>
        <dbReference type="PROSITE-ProRule" id="PRU00076"/>
    </source>
</evidence>
<evidence type="ECO:0000255" key="4">
    <source>
        <dbReference type="PROSITE-ProRule" id="PRU00081"/>
    </source>
</evidence>
<evidence type="ECO:0000255" key="5">
    <source>
        <dbReference type="PROSITE-ProRule" id="PRU00122"/>
    </source>
</evidence>
<evidence type="ECO:0000255" key="6">
    <source>
        <dbReference type="PROSITE-ProRule" id="PRU00739"/>
    </source>
</evidence>
<evidence type="ECO:0000256" key="7">
    <source>
        <dbReference type="SAM" id="MobiDB-lite"/>
    </source>
</evidence>
<evidence type="ECO:0000269" key="8">
    <source>
    </source>
</evidence>
<evidence type="ECO:0000303" key="9">
    <source>
    </source>
</evidence>
<evidence type="ECO:0000305" key="10"/>
<proteinExistence type="evidence at protein level"/>